<protein>
    <recommendedName>
        <fullName>rRNA biogenesis protein RRP36</fullName>
    </recommendedName>
    <alternativeName>
        <fullName>Ribosomal RNA-processing protein 36</fullName>
    </alternativeName>
</protein>
<gene>
    <name type="primary">RRP36</name>
    <name type="ORF">Kpol_1064p50</name>
</gene>
<feature type="chain" id="PRO_0000397667" description="rRNA biogenesis protein RRP36">
    <location>
        <begin position="1"/>
        <end position="313"/>
    </location>
</feature>
<feature type="region of interest" description="Disordered" evidence="3">
    <location>
        <begin position="1"/>
        <end position="166"/>
    </location>
</feature>
<feature type="coiled-coil region" evidence="2">
    <location>
        <begin position="64"/>
        <end position="95"/>
    </location>
</feature>
<feature type="compositionally biased region" description="Acidic residues" evidence="3">
    <location>
        <begin position="54"/>
        <end position="66"/>
    </location>
</feature>
<feature type="compositionally biased region" description="Basic and acidic residues" evidence="3">
    <location>
        <begin position="67"/>
        <end position="93"/>
    </location>
</feature>
<feature type="compositionally biased region" description="Acidic residues" evidence="3">
    <location>
        <begin position="94"/>
        <end position="122"/>
    </location>
</feature>
<feature type="compositionally biased region" description="Basic residues" evidence="3">
    <location>
        <begin position="127"/>
        <end position="138"/>
    </location>
</feature>
<feature type="compositionally biased region" description="Basic residues" evidence="3">
    <location>
        <begin position="145"/>
        <end position="154"/>
    </location>
</feature>
<name>RRP36_VANPO</name>
<accession>A7TMH4</accession>
<keyword id="KW-0175">Coiled coil</keyword>
<keyword id="KW-0539">Nucleus</keyword>
<keyword id="KW-1185">Reference proteome</keyword>
<keyword id="KW-0687">Ribonucleoprotein</keyword>
<keyword id="KW-0690">Ribosome biogenesis</keyword>
<keyword id="KW-0698">rRNA processing</keyword>
<proteinExistence type="inferred from homology"/>
<organism>
    <name type="scientific">Vanderwaltozyma polyspora (strain ATCC 22028 / DSM 70294 / BCRC 21397 / CBS 2163 / NBRC 10782 / NRRL Y-8283 / UCD 57-17)</name>
    <name type="common">Kluyveromyces polysporus</name>
    <dbReference type="NCBI Taxonomy" id="436907"/>
    <lineage>
        <taxon>Eukaryota</taxon>
        <taxon>Fungi</taxon>
        <taxon>Dikarya</taxon>
        <taxon>Ascomycota</taxon>
        <taxon>Saccharomycotina</taxon>
        <taxon>Saccharomycetes</taxon>
        <taxon>Saccharomycetales</taxon>
        <taxon>Saccharomycetaceae</taxon>
        <taxon>Vanderwaltozyma</taxon>
    </lineage>
</organism>
<comment type="function">
    <text evidence="1">Component of the 90S pre-ribosome involved in the maturation of rRNAs. Required for early cleavages of the pre-RNAs in the 40S ribosomal subunit maturation pathway (By similarity).</text>
</comment>
<comment type="subunit">
    <text evidence="1">Associates with 90S and pre-40S pre-ribosomal particles.</text>
</comment>
<comment type="subcellular location">
    <subcellularLocation>
        <location evidence="1">Nucleus</location>
        <location evidence="1">Nucleolus</location>
    </subcellularLocation>
</comment>
<comment type="similarity">
    <text evidence="4">Belongs to the RRP36 family.</text>
</comment>
<sequence>MSYYFKNLKPGQESDSEEDDLGKVLARNTQQEDESTDDELKTLSFGSLKKADAILEDEDSEDSEEEADKKMVNERKRKQVQEELKVSKKRYVEEEFEDDSSDSDSDSGSDNEGGFFEEDSGDEIGVKSKKKNKSRHKHAPTEHSSKKRVSKIRKIPGLETSRPKSNLYTDIRFDKSTGDDIDVNSIRKRYAFLDEYRQKEIDELEGMLKDRKFVNKLGDREYEDMQGNLKSMKSRLQTVKNRDLESKVIKEYEEKINMGNKNRYHLKESEKRKVLQKWKFDHMKAKQREKVMERKRKKKLGKEFKQFEFHKQR</sequence>
<evidence type="ECO:0000250" key="1"/>
<evidence type="ECO:0000255" key="2"/>
<evidence type="ECO:0000256" key="3">
    <source>
        <dbReference type="SAM" id="MobiDB-lite"/>
    </source>
</evidence>
<evidence type="ECO:0000305" key="4"/>
<reference key="1">
    <citation type="journal article" date="2007" name="Proc. Natl. Acad. Sci. U.S.A.">
        <title>Independent sorting-out of thousands of duplicated gene pairs in two yeast species descended from a whole-genome duplication.</title>
        <authorList>
            <person name="Scannell D.R."/>
            <person name="Frank A.C."/>
            <person name="Conant G.C."/>
            <person name="Byrne K.P."/>
            <person name="Woolfit M."/>
            <person name="Wolfe K.H."/>
        </authorList>
    </citation>
    <scope>NUCLEOTIDE SEQUENCE [LARGE SCALE GENOMIC DNA]</scope>
    <source>
        <strain>ATCC 22028 / DSM 70294 / BCRC 21397 / CBS 2163 / NBRC 10782 / NRRL Y-8283 / UCD 57-17</strain>
    </source>
</reference>
<dbReference type="EMBL" id="DS480422">
    <property type="protein sequence ID" value="EDO16568.1"/>
    <property type="molecule type" value="Genomic_DNA"/>
</dbReference>
<dbReference type="RefSeq" id="XP_001644426.1">
    <property type="nucleotide sequence ID" value="XM_001644376.1"/>
</dbReference>
<dbReference type="SMR" id="A7TMH4"/>
<dbReference type="FunCoup" id="A7TMH4">
    <property type="interactions" value="593"/>
</dbReference>
<dbReference type="STRING" id="436907.A7TMH4"/>
<dbReference type="GeneID" id="5544719"/>
<dbReference type="KEGG" id="vpo:Kpol_1064p50"/>
<dbReference type="eggNOG" id="KOG3190">
    <property type="taxonomic scope" value="Eukaryota"/>
</dbReference>
<dbReference type="HOGENOM" id="CLU_048802_3_0_1"/>
<dbReference type="InParanoid" id="A7TMH4"/>
<dbReference type="OMA" id="HMKSKQR"/>
<dbReference type="OrthoDB" id="448446at2759"/>
<dbReference type="PhylomeDB" id="A7TMH4"/>
<dbReference type="Proteomes" id="UP000000267">
    <property type="component" value="Unassembled WGS sequence"/>
</dbReference>
<dbReference type="GO" id="GO:0030686">
    <property type="term" value="C:90S preribosome"/>
    <property type="evidence" value="ECO:0007669"/>
    <property type="project" value="TreeGrafter"/>
</dbReference>
<dbReference type="GO" id="GO:0005730">
    <property type="term" value="C:nucleolus"/>
    <property type="evidence" value="ECO:0007669"/>
    <property type="project" value="UniProtKB-SubCell"/>
</dbReference>
<dbReference type="GO" id="GO:0000462">
    <property type="term" value="P:maturation of SSU-rRNA from tricistronic rRNA transcript (SSU-rRNA, 5.8S rRNA, LSU-rRNA)"/>
    <property type="evidence" value="ECO:0007669"/>
    <property type="project" value="TreeGrafter"/>
</dbReference>
<dbReference type="InterPro" id="IPR009292">
    <property type="entry name" value="RRP36"/>
</dbReference>
<dbReference type="PANTHER" id="PTHR21738">
    <property type="entry name" value="RIBOSOMAL RNA PROCESSING PROTEIN 36 HOMOLOG"/>
    <property type="match status" value="1"/>
</dbReference>
<dbReference type="PANTHER" id="PTHR21738:SF0">
    <property type="entry name" value="RIBOSOMAL RNA PROCESSING PROTEIN 36 HOMOLOG"/>
    <property type="match status" value="1"/>
</dbReference>
<dbReference type="Pfam" id="PF06102">
    <property type="entry name" value="RRP36"/>
    <property type="match status" value="1"/>
</dbReference>